<feature type="chain" id="PRO_0000403204" description="Inner capsid protein VP1">
    <location>
        <begin position="1"/>
        <end position="1333"/>
    </location>
</feature>
<feature type="region of interest" description="Disordered" evidence="1">
    <location>
        <begin position="1"/>
        <end position="71"/>
    </location>
</feature>
<feature type="compositionally biased region" description="Low complexity" evidence="1">
    <location>
        <begin position="1"/>
        <end position="10"/>
    </location>
</feature>
<feature type="compositionally biased region" description="Basic and acidic residues" evidence="1">
    <location>
        <begin position="11"/>
        <end position="21"/>
    </location>
</feature>
<feature type="compositionally biased region" description="Polar residues" evidence="1">
    <location>
        <begin position="22"/>
        <end position="42"/>
    </location>
</feature>
<feature type="strand" evidence="7">
    <location>
        <begin position="78"/>
        <end position="82"/>
    </location>
</feature>
<feature type="strand" evidence="6">
    <location>
        <begin position="99"/>
        <end position="101"/>
    </location>
</feature>
<feature type="strand" evidence="5">
    <location>
        <begin position="112"/>
        <end position="114"/>
    </location>
</feature>
<feature type="strand" evidence="7">
    <location>
        <begin position="118"/>
        <end position="123"/>
    </location>
</feature>
<feature type="strand" evidence="7">
    <location>
        <begin position="145"/>
        <end position="147"/>
    </location>
</feature>
<feature type="strand" evidence="7">
    <location>
        <begin position="155"/>
        <end position="159"/>
    </location>
</feature>
<feature type="strand" evidence="7">
    <location>
        <begin position="163"/>
        <end position="170"/>
    </location>
</feature>
<feature type="turn" evidence="7">
    <location>
        <begin position="172"/>
        <end position="174"/>
    </location>
</feature>
<feature type="helix" evidence="7">
    <location>
        <begin position="184"/>
        <end position="196"/>
    </location>
</feature>
<feature type="strand" evidence="7">
    <location>
        <begin position="201"/>
        <end position="208"/>
    </location>
</feature>
<feature type="turn" evidence="7">
    <location>
        <begin position="210"/>
        <end position="212"/>
    </location>
</feature>
<feature type="helix" evidence="7">
    <location>
        <begin position="215"/>
        <end position="217"/>
    </location>
</feature>
<feature type="helix" evidence="6">
    <location>
        <begin position="221"/>
        <end position="223"/>
    </location>
</feature>
<feature type="strand" evidence="4">
    <location>
        <begin position="228"/>
        <end position="232"/>
    </location>
</feature>
<feature type="strand" evidence="7">
    <location>
        <begin position="235"/>
        <end position="237"/>
    </location>
</feature>
<feature type="helix" evidence="5">
    <location>
        <begin position="239"/>
        <end position="244"/>
    </location>
</feature>
<feature type="helix" evidence="7">
    <location>
        <begin position="245"/>
        <end position="259"/>
    </location>
</feature>
<feature type="strand" evidence="7">
    <location>
        <begin position="263"/>
        <end position="266"/>
    </location>
</feature>
<feature type="strand" evidence="8">
    <location>
        <begin position="269"/>
        <end position="271"/>
    </location>
</feature>
<feature type="helix" evidence="7">
    <location>
        <begin position="275"/>
        <end position="277"/>
    </location>
</feature>
<feature type="helix" evidence="7">
    <location>
        <begin position="280"/>
        <end position="283"/>
    </location>
</feature>
<feature type="strand" evidence="5">
    <location>
        <begin position="286"/>
        <end position="288"/>
    </location>
</feature>
<feature type="strand" evidence="7">
    <location>
        <begin position="290"/>
        <end position="293"/>
    </location>
</feature>
<feature type="helix" evidence="7">
    <location>
        <begin position="298"/>
        <end position="301"/>
    </location>
</feature>
<feature type="turn" evidence="7">
    <location>
        <begin position="302"/>
        <end position="304"/>
    </location>
</feature>
<feature type="helix" evidence="7">
    <location>
        <begin position="308"/>
        <end position="318"/>
    </location>
</feature>
<feature type="strand" evidence="4">
    <location>
        <begin position="320"/>
        <end position="322"/>
    </location>
</feature>
<feature type="strand" evidence="5">
    <location>
        <begin position="327"/>
        <end position="331"/>
    </location>
</feature>
<feature type="strand" evidence="8">
    <location>
        <begin position="332"/>
        <end position="334"/>
    </location>
</feature>
<feature type="turn" evidence="7">
    <location>
        <begin position="336"/>
        <end position="338"/>
    </location>
</feature>
<feature type="strand" evidence="7">
    <location>
        <begin position="343"/>
        <end position="350"/>
    </location>
</feature>
<feature type="helix" evidence="7">
    <location>
        <begin position="352"/>
        <end position="367"/>
    </location>
</feature>
<feature type="helix" evidence="7">
    <location>
        <begin position="372"/>
        <end position="374"/>
    </location>
</feature>
<feature type="helix" evidence="7">
    <location>
        <begin position="375"/>
        <end position="381"/>
    </location>
</feature>
<feature type="turn" evidence="4">
    <location>
        <begin position="384"/>
        <end position="386"/>
    </location>
</feature>
<feature type="strand" evidence="7">
    <location>
        <begin position="388"/>
        <end position="390"/>
    </location>
</feature>
<feature type="helix" evidence="7">
    <location>
        <begin position="395"/>
        <end position="397"/>
    </location>
</feature>
<feature type="strand" evidence="5">
    <location>
        <begin position="398"/>
        <end position="400"/>
    </location>
</feature>
<feature type="helix" evidence="7">
    <location>
        <begin position="405"/>
        <end position="418"/>
    </location>
</feature>
<feature type="helix" evidence="7">
    <location>
        <begin position="422"/>
        <end position="437"/>
    </location>
</feature>
<feature type="turn" evidence="7">
    <location>
        <begin position="451"/>
        <end position="455"/>
    </location>
</feature>
<feature type="helix" evidence="9">
    <location>
        <begin position="457"/>
        <end position="459"/>
    </location>
</feature>
<feature type="helix" evidence="7">
    <location>
        <begin position="460"/>
        <end position="470"/>
    </location>
</feature>
<feature type="helix" evidence="7">
    <location>
        <begin position="477"/>
        <end position="486"/>
    </location>
</feature>
<feature type="helix" evidence="7">
    <location>
        <begin position="505"/>
        <end position="507"/>
    </location>
</feature>
<feature type="helix" evidence="7">
    <location>
        <begin position="508"/>
        <end position="520"/>
    </location>
</feature>
<feature type="helix" evidence="7">
    <location>
        <begin position="522"/>
        <end position="543"/>
    </location>
</feature>
<feature type="helix" evidence="7">
    <location>
        <begin position="545"/>
        <end position="554"/>
    </location>
</feature>
<feature type="strand" evidence="7">
    <location>
        <begin position="556"/>
        <end position="560"/>
    </location>
</feature>
<feature type="strand" evidence="7">
    <location>
        <begin position="566"/>
        <end position="568"/>
    </location>
</feature>
<feature type="helix" evidence="7">
    <location>
        <begin position="577"/>
        <end position="581"/>
    </location>
</feature>
<feature type="strand" evidence="5">
    <location>
        <begin position="582"/>
        <end position="586"/>
    </location>
</feature>
<feature type="helix" evidence="7">
    <location>
        <begin position="587"/>
        <end position="590"/>
    </location>
</feature>
<feature type="helix" evidence="7">
    <location>
        <begin position="598"/>
        <end position="605"/>
    </location>
</feature>
<feature type="strand" evidence="7">
    <location>
        <begin position="612"/>
        <end position="615"/>
    </location>
</feature>
<feature type="helix" evidence="7">
    <location>
        <begin position="617"/>
        <end position="621"/>
    </location>
</feature>
<feature type="strand" evidence="7">
    <location>
        <begin position="627"/>
        <end position="630"/>
    </location>
</feature>
<feature type="strand" evidence="7">
    <location>
        <begin position="632"/>
        <end position="637"/>
    </location>
</feature>
<feature type="strand" evidence="4">
    <location>
        <begin position="642"/>
        <end position="645"/>
    </location>
</feature>
<feature type="helix" evidence="7">
    <location>
        <begin position="647"/>
        <end position="669"/>
    </location>
</feature>
<feature type="helix" evidence="7">
    <location>
        <begin position="674"/>
        <end position="700"/>
    </location>
</feature>
<feature type="helix" evidence="7">
    <location>
        <begin position="702"/>
        <end position="709"/>
    </location>
</feature>
<feature type="turn" evidence="7">
    <location>
        <begin position="724"/>
        <end position="726"/>
    </location>
</feature>
<feature type="strand" evidence="7">
    <location>
        <begin position="732"/>
        <end position="735"/>
    </location>
</feature>
<feature type="strand" evidence="7">
    <location>
        <begin position="737"/>
        <end position="739"/>
    </location>
</feature>
<feature type="strand" evidence="7">
    <location>
        <begin position="742"/>
        <end position="746"/>
    </location>
</feature>
<feature type="turn" evidence="7">
    <location>
        <begin position="752"/>
        <end position="756"/>
    </location>
</feature>
<feature type="helix" evidence="7">
    <location>
        <begin position="760"/>
        <end position="762"/>
    </location>
</feature>
<feature type="helix" evidence="7">
    <location>
        <begin position="763"/>
        <end position="768"/>
    </location>
</feature>
<feature type="strand" evidence="5">
    <location>
        <begin position="769"/>
        <end position="771"/>
    </location>
</feature>
<feature type="turn" evidence="5">
    <location>
        <begin position="773"/>
        <end position="776"/>
    </location>
</feature>
<feature type="helix" evidence="7">
    <location>
        <begin position="797"/>
        <end position="823"/>
    </location>
</feature>
<feature type="helix" evidence="7">
    <location>
        <begin position="824"/>
        <end position="826"/>
    </location>
</feature>
<feature type="strand" evidence="7">
    <location>
        <begin position="829"/>
        <end position="835"/>
    </location>
</feature>
<feature type="strand" evidence="4">
    <location>
        <begin position="838"/>
        <end position="840"/>
    </location>
</feature>
<feature type="strand" evidence="7">
    <location>
        <begin position="846"/>
        <end position="851"/>
    </location>
</feature>
<feature type="helix" evidence="7">
    <location>
        <begin position="852"/>
        <end position="857"/>
    </location>
</feature>
<feature type="helix" evidence="7">
    <location>
        <begin position="859"/>
        <end position="866"/>
    </location>
</feature>
<feature type="helix" evidence="7">
    <location>
        <begin position="880"/>
        <end position="890"/>
    </location>
</feature>
<feature type="strand" evidence="7">
    <location>
        <begin position="894"/>
        <end position="897"/>
    </location>
</feature>
<feature type="helix" evidence="7">
    <location>
        <begin position="904"/>
        <end position="912"/>
    </location>
</feature>
<feature type="strand" evidence="7">
    <location>
        <begin position="916"/>
        <end position="920"/>
    </location>
</feature>
<feature type="helix" evidence="7">
    <location>
        <begin position="925"/>
        <end position="928"/>
    </location>
</feature>
<feature type="strand" evidence="7">
    <location>
        <begin position="941"/>
        <end position="947"/>
    </location>
</feature>
<feature type="helix" evidence="7">
    <location>
        <begin position="948"/>
        <end position="950"/>
    </location>
</feature>
<feature type="turn" evidence="7">
    <location>
        <begin position="955"/>
        <end position="957"/>
    </location>
</feature>
<feature type="helix" evidence="7">
    <location>
        <begin position="962"/>
        <end position="970"/>
    </location>
</feature>
<feature type="helix" evidence="7">
    <location>
        <begin position="976"/>
        <end position="990"/>
    </location>
</feature>
<feature type="helix" evidence="7">
    <location>
        <begin position="996"/>
        <end position="1005"/>
    </location>
</feature>
<feature type="strand" evidence="7">
    <location>
        <begin position="1018"/>
        <end position="1022"/>
    </location>
</feature>
<feature type="strand" evidence="4">
    <location>
        <begin position="1024"/>
        <end position="1026"/>
    </location>
</feature>
<feature type="turn" evidence="7">
    <location>
        <begin position="1033"/>
        <end position="1035"/>
    </location>
</feature>
<feature type="helix" evidence="7">
    <location>
        <begin position="1038"/>
        <end position="1040"/>
    </location>
</feature>
<feature type="helix" evidence="7">
    <location>
        <begin position="1044"/>
        <end position="1046"/>
    </location>
</feature>
<feature type="helix" evidence="7">
    <location>
        <begin position="1049"/>
        <end position="1062"/>
    </location>
</feature>
<feature type="turn" evidence="7">
    <location>
        <begin position="1065"/>
        <end position="1067"/>
    </location>
</feature>
<feature type="strand" evidence="7">
    <location>
        <begin position="1071"/>
        <end position="1080"/>
    </location>
</feature>
<feature type="strand" evidence="7">
    <location>
        <begin position="1097"/>
        <end position="1100"/>
    </location>
</feature>
<feature type="helix" evidence="7">
    <location>
        <begin position="1103"/>
        <end position="1105"/>
    </location>
</feature>
<feature type="strand" evidence="7">
    <location>
        <begin position="1106"/>
        <end position="1110"/>
    </location>
</feature>
<feature type="strand" evidence="7">
    <location>
        <begin position="1112"/>
        <end position="1120"/>
    </location>
</feature>
<feature type="turn" evidence="7">
    <location>
        <begin position="1122"/>
        <end position="1124"/>
    </location>
</feature>
<feature type="strand" evidence="7">
    <location>
        <begin position="1127"/>
        <end position="1130"/>
    </location>
</feature>
<feature type="helix" evidence="7">
    <location>
        <begin position="1131"/>
        <end position="1133"/>
    </location>
</feature>
<feature type="strand" evidence="7">
    <location>
        <begin position="1137"/>
        <end position="1142"/>
    </location>
</feature>
<feature type="helix" evidence="7">
    <location>
        <begin position="1149"/>
        <end position="1161"/>
    </location>
</feature>
<feature type="strand" evidence="7">
    <location>
        <begin position="1166"/>
        <end position="1178"/>
    </location>
</feature>
<feature type="turn" evidence="7">
    <location>
        <begin position="1180"/>
        <end position="1182"/>
    </location>
</feature>
<feature type="helix" evidence="7">
    <location>
        <begin position="1190"/>
        <end position="1195"/>
    </location>
</feature>
<feature type="strand" evidence="7">
    <location>
        <begin position="1201"/>
        <end position="1207"/>
    </location>
</feature>
<feature type="helix" evidence="7">
    <location>
        <begin position="1209"/>
        <end position="1211"/>
    </location>
</feature>
<feature type="strand" evidence="4">
    <location>
        <begin position="1217"/>
        <end position="1219"/>
    </location>
</feature>
<feature type="strand" evidence="7">
    <location>
        <begin position="1225"/>
        <end position="1234"/>
    </location>
</feature>
<feature type="strand" evidence="7">
    <location>
        <begin position="1238"/>
        <end position="1246"/>
    </location>
</feature>
<feature type="strand" evidence="7">
    <location>
        <begin position="1249"/>
        <end position="1253"/>
    </location>
</feature>
<feature type="helix" evidence="7">
    <location>
        <begin position="1262"/>
        <end position="1265"/>
    </location>
</feature>
<feature type="strand" evidence="9">
    <location>
        <begin position="1272"/>
        <end position="1274"/>
    </location>
</feature>
<feature type="strand" evidence="4">
    <location>
        <begin position="1281"/>
        <end position="1283"/>
    </location>
</feature>
<feature type="turn" evidence="7">
    <location>
        <begin position="1290"/>
        <end position="1292"/>
    </location>
</feature>
<feature type="strand" evidence="7">
    <location>
        <begin position="1300"/>
        <end position="1305"/>
    </location>
</feature>
<feature type="turn" evidence="5">
    <location>
        <begin position="1307"/>
        <end position="1309"/>
    </location>
</feature>
<feature type="strand" evidence="7">
    <location>
        <begin position="1315"/>
        <end position="1320"/>
    </location>
</feature>
<feature type="helix" evidence="7">
    <location>
        <begin position="1325"/>
        <end position="1327"/>
    </location>
</feature>
<organismHost>
    <name type="scientific">Bombyx mori</name>
    <name type="common">Silk moth</name>
    <dbReference type="NCBI Taxonomy" id="7091"/>
</organismHost>
<proteinExistence type="evidence at protein level"/>
<protein>
    <recommendedName>
        <fullName>Inner capsid protein VP1</fullName>
    </recommendedName>
</protein>
<comment type="function">
    <text evidence="2">Inner capsid protein that self-assembles to form an icosahedral capsid with a T=2 symmetry, which consists of 120 copies of VP2, with channels at each of its five-fold vertices. This capsid constitutes the innermost concentric layer of the viral mature particle.</text>
</comment>
<comment type="subunit">
    <text evidence="2">Homodecamer; each decamer is made up of two conformers of VP2, called VP2A and VP2B. 12 homodecamers assemble to form an icosahedral capsid.</text>
</comment>
<comment type="subcellular location">
    <subcellularLocation>
        <location evidence="2">Virion</location>
    </subcellularLocation>
    <text evidence="2">Found in the inner capsid (120 copies).</text>
</comment>
<comment type="similarity">
    <text evidence="3">Belongs to the turreted BTV-fold inner capsid family.</text>
</comment>
<sequence>MHSTNNNSNKRNNEEKHKQPEIDSSANNGEGTSGTRAQTVGDTATEAGVRNETEAGASTRRQTDGTGLSGTNAKIATASSARQADVEKPADVTFTIENVDDVGIMQQKKPPTVVQSRTDVFNEQFANEALHPTTKVIFNGLDVNTEVQPLSDDFKQISDPKGYLTYSVKYEDQFTKKDKLRASEADDRIVGPTVNLFKYGAAVVNIDLNRDFFDTATGIDLTKGIPLVQDLLVPIGVTAGAEQSAEYVSGLLMVLFKVMTDNRLVIVGETTTPMSNTLSTVVNNVLRTTYHNNVGVNPALLRDFTQVNWLNRDITNMLQQAGTKYGLGLTETRLDYVRLVKTIVGHALNIDHFAASVLNINLRALMEANVTADDRIKALQAHSMISTQFHGPNQGALRPELAFDHDHIIRCLMLAAANYPRLEGIIVQINTGYVASANVIRPVSEKRYFPENLEQNQSAARLVSAVKARASEADISSIHLAIAREVSPMFNVHELKKIAESFEDPSSIVVVLEFILFALFFPTEFNRIKGDIQNVLLLFFSRWYPVEYGIFVQRGATYTINAAGEFEFSGRNEKWDQALYLSEHFPALFSDVPLAGANTIIAIMRLFTPQGFLRTDDLAIAANFPRASRNPQTYIPYTNQRGTVTNEFASRFRTIVATLANVVNERAVQDDMQKATRSCTKQWLRHLETQFDNIAVAHTDHLSVVYATMSNFMLNFTNNFSGNHATFKPDQYVITSPEGSYKPIIERQGETVDGLTIIDTSIVWPILCQCTYPLVRQSGKGVDAVSIMEEIVYPDPSTTLSQSLSVAQVLSKLTLPDAFINMILSGGDSVVMRTYQTEADDDLDEGIRMTTYDQYLSHIRERLHITNVPDPIYITGASTPDQIAASVQATHVAVVLYQSGVINGPASTYLRENEVLVVMPDYYDVVSRFANANLQMNNNRYHESVLEIADIFDQADFIQTSDAVRQLRALMPTLSTSQIRHAIERIAQITDVDSTDYGKLTLRFLGTLTRSLKMQNAQIRRIRPDGTVLRYDDQIDIEAFRWSRYFLDELQLRRLSVGLRLITNPRIARRFNGVRIMYLTDDDPDPDFVPDVPEGYVAVQYAHRLFSSSLANKRNRVTYTHPPTGMAYPSPTGRPHVHMTINERAGMSKLVADNIIASVIKSNWVVDILDIEYTAEVMTPSEGYTQHVDAESIMTAPKGKLFHLQFMDGLLRPEPSAFDPPASGEDMRLIYPLQPISVARSMRAIVNHNEVDRPRGAVAPSSYEMDTGTLSRNGDLLYSPVANGQVGIPKLEVDHISFSNVVSMMTANIRTGDDMAVERVNPDDVRAINIRNA</sequence>
<dbReference type="EMBL" id="AY388398">
    <property type="protein sequence ID" value="AAQ93375.1"/>
    <property type="molecule type" value="Genomic_RNA"/>
</dbReference>
<dbReference type="PDB" id="3CNF">
    <property type="method" value="EM"/>
    <property type="resolution" value="3.88 A"/>
    <property type="chains" value="A/B=1-1333"/>
</dbReference>
<dbReference type="PDB" id="3IZ3">
    <property type="method" value="EM"/>
    <property type="chains" value="B/C=1-1333"/>
</dbReference>
<dbReference type="PDB" id="3IZX">
    <property type="method" value="EM"/>
    <property type="chains" value="B/C=1-1333"/>
</dbReference>
<dbReference type="PDB" id="3J17">
    <property type="method" value="EM"/>
    <property type="resolution" value="4.10 A"/>
    <property type="chains" value="B/C=1-1333"/>
</dbReference>
<dbReference type="PDB" id="3JAY">
    <property type="method" value="EM"/>
    <property type="resolution" value="3.00 A"/>
    <property type="chains" value="B/C=1-1333"/>
</dbReference>
<dbReference type="PDB" id="3JAZ">
    <property type="method" value="EM"/>
    <property type="resolution" value="3.10 A"/>
    <property type="chains" value="B/C=1-1333"/>
</dbReference>
<dbReference type="PDB" id="3JB0">
    <property type="method" value="EM"/>
    <property type="resolution" value="2.90 A"/>
    <property type="chains" value="B/C=1-1333"/>
</dbReference>
<dbReference type="PDB" id="3JB1">
    <property type="method" value="EM"/>
    <property type="resolution" value="3.10 A"/>
    <property type="chains" value="B/C=1-1333"/>
</dbReference>
<dbReference type="PDB" id="3JB2">
    <property type="method" value="EM"/>
    <property type="resolution" value="3.10 A"/>
    <property type="chains" value="B/C=1-1333"/>
</dbReference>
<dbReference type="PDB" id="3JB3">
    <property type="method" value="EM"/>
    <property type="resolution" value="3.10 A"/>
    <property type="chains" value="B/C=1-1333"/>
</dbReference>
<dbReference type="PDB" id="5H0S">
    <property type="method" value="EM"/>
    <property type="resolution" value="3.30 A"/>
    <property type="chains" value="B/C=1-1333"/>
</dbReference>
<dbReference type="PDBsum" id="3CNF"/>
<dbReference type="PDBsum" id="3IZ3"/>
<dbReference type="PDBsum" id="3IZX"/>
<dbReference type="PDBsum" id="3J17"/>
<dbReference type="PDBsum" id="3JAY"/>
<dbReference type="PDBsum" id="3JAZ"/>
<dbReference type="PDBsum" id="3JB0"/>
<dbReference type="PDBsum" id="3JB1"/>
<dbReference type="PDBsum" id="3JB2"/>
<dbReference type="PDBsum" id="3JB3"/>
<dbReference type="PDBsum" id="5H0S"/>
<dbReference type="SMR" id="Q6TS43"/>
<dbReference type="DIP" id="DIP-59130N"/>
<dbReference type="IntAct" id="Q6TS43">
    <property type="interactions" value="2"/>
</dbReference>
<dbReference type="EvolutionaryTrace" id="Q6TS43"/>
<dbReference type="GO" id="GO:0039616">
    <property type="term" value="C:T=2 icosahedral viral capsid"/>
    <property type="evidence" value="ECO:0007669"/>
    <property type="project" value="UniProtKB-KW"/>
</dbReference>
<dbReference type="GO" id="GO:0039625">
    <property type="term" value="C:viral inner capsid"/>
    <property type="evidence" value="ECO:0007669"/>
    <property type="project" value="UniProtKB-KW"/>
</dbReference>
<dbReference type="InterPro" id="IPR049422">
    <property type="entry name" value="VP1/VP3_C"/>
</dbReference>
<dbReference type="InterPro" id="IPR049421">
    <property type="entry name" value="VP1_protrusion"/>
</dbReference>
<dbReference type="Pfam" id="PF21416">
    <property type="entry name" value="VP1-like_C"/>
    <property type="match status" value="1"/>
</dbReference>
<dbReference type="Pfam" id="PF20855">
    <property type="entry name" value="VP1_protrusion"/>
    <property type="match status" value="1"/>
</dbReference>
<keyword id="KW-0002">3D-structure</keyword>
<keyword id="KW-0167">Capsid protein</keyword>
<keyword id="KW-1153">Inner capsid protein</keyword>
<keyword id="KW-1141">T=2 icosahedral capsid protein</keyword>
<keyword id="KW-0946">Virion</keyword>
<reference key="1">
    <citation type="submission" date="2003-09" db="EMBL/GenBank/DDBJ databases">
        <title>Nucleotide sequence of genome segment 1 from Bombyx mori cypovirus.</title>
        <authorList>
            <person name="Zhang Q."/>
            <person name="Huang Y."/>
        </authorList>
    </citation>
    <scope>NUCLEOTIDE SEQUENCE [GENOMIC RNA]</scope>
    <source>
        <strain>Guangzhou</strain>
    </source>
</reference>
<reference key="2">
    <citation type="journal article" date="1999" name="J. Virol.">
        <title>Visualization of protein-RNA interactions in cytoplasmic polyhedrosis virus.</title>
        <authorList>
            <person name="Zhang H."/>
            <person name="Zhang J."/>
            <person name="Yu X."/>
            <person name="Lu X."/>
            <person name="Zhang Q."/>
            <person name="Jakana J."/>
            <person name="Chen D.H."/>
            <person name="Zhang X."/>
            <person name="Zhou Z.H."/>
        </authorList>
    </citation>
    <scope>FUNCTION</scope>
</reference>
<reference key="3">
    <citation type="journal article" date="2008" name="Nature">
        <title>3.88 A structure of cytoplasmic polyhedrosis virus by cryo-electron microscopy.</title>
        <authorList>
            <person name="Yu X."/>
            <person name="Jin L."/>
            <person name="Zhou Z.H."/>
        </authorList>
    </citation>
    <scope>STRUCTURE BY ELECTRON MICROSCOPY (3.88 ANGSTROMS)</scope>
    <scope>FUNCTION</scope>
    <scope>SUBCELLULAR LOCATION</scope>
</reference>
<name>CAPSD_CPVBM</name>
<organism>
    <name type="scientific">Bombyx mori cytoplasmic polyhedrosis virus</name>
    <name type="common">BmCPV</name>
    <dbReference type="NCBI Taxonomy" id="110829"/>
    <lineage>
        <taxon>Viruses</taxon>
        <taxon>Riboviria</taxon>
        <taxon>Orthornavirae</taxon>
        <taxon>Duplornaviricota</taxon>
        <taxon>Resentoviricetes</taxon>
        <taxon>Reovirales</taxon>
        <taxon>Spinareoviridae</taxon>
        <taxon>Cypovirus</taxon>
        <taxon>Cypovirus 1</taxon>
    </lineage>
</organism>
<accession>Q6TS43</accession>
<evidence type="ECO:0000256" key="1">
    <source>
        <dbReference type="SAM" id="MobiDB-lite"/>
    </source>
</evidence>
<evidence type="ECO:0000269" key="2">
    <source>
    </source>
</evidence>
<evidence type="ECO:0000305" key="3"/>
<evidence type="ECO:0007829" key="4">
    <source>
        <dbReference type="PDB" id="3IZX"/>
    </source>
</evidence>
<evidence type="ECO:0007829" key="5">
    <source>
        <dbReference type="PDB" id="3JAY"/>
    </source>
</evidence>
<evidence type="ECO:0007829" key="6">
    <source>
        <dbReference type="PDB" id="3JAZ"/>
    </source>
</evidence>
<evidence type="ECO:0007829" key="7">
    <source>
        <dbReference type="PDB" id="3JB0"/>
    </source>
</evidence>
<evidence type="ECO:0007829" key="8">
    <source>
        <dbReference type="PDB" id="3JB1"/>
    </source>
</evidence>
<evidence type="ECO:0007829" key="9">
    <source>
        <dbReference type="PDB" id="5H0S"/>
    </source>
</evidence>